<comment type="function">
    <text evidence="1">This is one of the proteins that bind and probably mediate the attachment of the 5S RNA into the large ribosomal subunit, where it forms part of the central protuberance.</text>
</comment>
<comment type="subunit">
    <text evidence="1">Part of the 50S ribosomal subunit; part of the 5S rRNA/L5/L18/L25 subcomplex. Contacts the 5S and 23S rRNAs.</text>
</comment>
<comment type="similarity">
    <text evidence="1">Belongs to the universal ribosomal protein uL18 family.</text>
</comment>
<keyword id="KW-1185">Reference proteome</keyword>
<keyword id="KW-0687">Ribonucleoprotein</keyword>
<keyword id="KW-0689">Ribosomal protein</keyword>
<keyword id="KW-0694">RNA-binding</keyword>
<keyword id="KW-0699">rRNA-binding</keyword>
<sequence length="121" mass="12845">MLTKKEQRLRRSRQTRIRIATQGVARLTVNRTNLHIYASVISGDGTKVLAAASTAEVEVRKEIGASGKGGNVAAAQAIGKRIAEKAKAAGVEKVAFDRAGFAYHGRVKALADAAREAGLQF</sequence>
<organism>
    <name type="scientific">Polaromonas sp. (strain JS666 / ATCC BAA-500)</name>
    <dbReference type="NCBI Taxonomy" id="296591"/>
    <lineage>
        <taxon>Bacteria</taxon>
        <taxon>Pseudomonadati</taxon>
        <taxon>Pseudomonadota</taxon>
        <taxon>Betaproteobacteria</taxon>
        <taxon>Burkholderiales</taxon>
        <taxon>Comamonadaceae</taxon>
        <taxon>Polaromonas</taxon>
    </lineage>
</organism>
<proteinExistence type="inferred from homology"/>
<dbReference type="EMBL" id="CP000316">
    <property type="protein sequence ID" value="ABE42455.1"/>
    <property type="molecule type" value="Genomic_DNA"/>
</dbReference>
<dbReference type="RefSeq" id="WP_007869273.1">
    <property type="nucleotide sequence ID" value="NZ_FNHX01000009.1"/>
</dbReference>
<dbReference type="SMR" id="Q12G87"/>
<dbReference type="STRING" id="296591.Bpro_0491"/>
<dbReference type="KEGG" id="pol:Bpro_0491"/>
<dbReference type="eggNOG" id="COG0256">
    <property type="taxonomic scope" value="Bacteria"/>
</dbReference>
<dbReference type="HOGENOM" id="CLU_098841_0_1_4"/>
<dbReference type="OrthoDB" id="9810939at2"/>
<dbReference type="Proteomes" id="UP000001983">
    <property type="component" value="Chromosome"/>
</dbReference>
<dbReference type="GO" id="GO:0022625">
    <property type="term" value="C:cytosolic large ribosomal subunit"/>
    <property type="evidence" value="ECO:0007669"/>
    <property type="project" value="TreeGrafter"/>
</dbReference>
<dbReference type="GO" id="GO:0008097">
    <property type="term" value="F:5S rRNA binding"/>
    <property type="evidence" value="ECO:0007669"/>
    <property type="project" value="TreeGrafter"/>
</dbReference>
<dbReference type="GO" id="GO:0003735">
    <property type="term" value="F:structural constituent of ribosome"/>
    <property type="evidence" value="ECO:0007669"/>
    <property type="project" value="InterPro"/>
</dbReference>
<dbReference type="GO" id="GO:0006412">
    <property type="term" value="P:translation"/>
    <property type="evidence" value="ECO:0007669"/>
    <property type="project" value="UniProtKB-UniRule"/>
</dbReference>
<dbReference type="CDD" id="cd00432">
    <property type="entry name" value="Ribosomal_L18_L5e"/>
    <property type="match status" value="1"/>
</dbReference>
<dbReference type="FunFam" id="3.30.420.100:FF:000001">
    <property type="entry name" value="50S ribosomal protein L18"/>
    <property type="match status" value="1"/>
</dbReference>
<dbReference type="Gene3D" id="3.30.420.100">
    <property type="match status" value="1"/>
</dbReference>
<dbReference type="HAMAP" id="MF_01337_B">
    <property type="entry name" value="Ribosomal_uL18_B"/>
    <property type="match status" value="1"/>
</dbReference>
<dbReference type="InterPro" id="IPR004389">
    <property type="entry name" value="Ribosomal_uL18_bac-type"/>
</dbReference>
<dbReference type="InterPro" id="IPR005484">
    <property type="entry name" value="Ribosomal_uL18_bac/euk"/>
</dbReference>
<dbReference type="NCBIfam" id="TIGR00060">
    <property type="entry name" value="L18_bact"/>
    <property type="match status" value="1"/>
</dbReference>
<dbReference type="PANTHER" id="PTHR12899">
    <property type="entry name" value="39S RIBOSOMAL PROTEIN L18, MITOCHONDRIAL"/>
    <property type="match status" value="1"/>
</dbReference>
<dbReference type="PANTHER" id="PTHR12899:SF3">
    <property type="entry name" value="LARGE RIBOSOMAL SUBUNIT PROTEIN UL18M"/>
    <property type="match status" value="1"/>
</dbReference>
<dbReference type="Pfam" id="PF00861">
    <property type="entry name" value="Ribosomal_L18p"/>
    <property type="match status" value="1"/>
</dbReference>
<dbReference type="SUPFAM" id="SSF53137">
    <property type="entry name" value="Translational machinery components"/>
    <property type="match status" value="1"/>
</dbReference>
<gene>
    <name evidence="1" type="primary">rplR</name>
    <name type="ordered locus">Bpro_0491</name>
</gene>
<feature type="chain" id="PRO_1000053078" description="Large ribosomal subunit protein uL18">
    <location>
        <begin position="1"/>
        <end position="121"/>
    </location>
</feature>
<name>RL18_POLSJ</name>
<reference key="1">
    <citation type="journal article" date="2008" name="Appl. Environ. Microbiol.">
        <title>The genome of Polaromonas sp. strain JS666: insights into the evolution of a hydrocarbon- and xenobiotic-degrading bacterium, and features of relevance to biotechnology.</title>
        <authorList>
            <person name="Mattes T.E."/>
            <person name="Alexander A.K."/>
            <person name="Richardson P.M."/>
            <person name="Munk A.C."/>
            <person name="Han C.S."/>
            <person name="Stothard P."/>
            <person name="Coleman N.V."/>
        </authorList>
    </citation>
    <scope>NUCLEOTIDE SEQUENCE [LARGE SCALE GENOMIC DNA]</scope>
    <source>
        <strain>JS666 / ATCC BAA-500</strain>
    </source>
</reference>
<evidence type="ECO:0000255" key="1">
    <source>
        <dbReference type="HAMAP-Rule" id="MF_01337"/>
    </source>
</evidence>
<evidence type="ECO:0000305" key="2"/>
<accession>Q12G87</accession>
<protein>
    <recommendedName>
        <fullName evidence="1">Large ribosomal subunit protein uL18</fullName>
    </recommendedName>
    <alternativeName>
        <fullName evidence="2">50S ribosomal protein L18</fullName>
    </alternativeName>
</protein>